<evidence type="ECO:0000255" key="1">
    <source>
        <dbReference type="HAMAP-Rule" id="MF_01396"/>
    </source>
</evidence>
<proteinExistence type="inferred from homology"/>
<sequence length="74" mass="7686">MDMVSLKFIGIGLMAIGMYGAALGVSNIFSSLLSSIARNPSAAENLQRMALIGAGLAEAMGLFSFVIAMLLIFS</sequence>
<reference key="1">
    <citation type="journal article" date="2005" name="PLoS Biol.">
        <title>The genome sequence of Rickettsia felis identifies the first putative conjugative plasmid in an obligate intracellular parasite.</title>
        <authorList>
            <person name="Ogata H."/>
            <person name="Renesto P."/>
            <person name="Audic S."/>
            <person name="Robert C."/>
            <person name="Blanc G."/>
            <person name="Fournier P.-E."/>
            <person name="Parinello H."/>
            <person name="Claverie J.-M."/>
            <person name="Raoult D."/>
        </authorList>
    </citation>
    <scope>NUCLEOTIDE SEQUENCE [LARGE SCALE GENOMIC DNA]</scope>
    <source>
        <strain>ATCC VR-1525 / URRWXCal2</strain>
    </source>
</reference>
<dbReference type="EMBL" id="CP000053">
    <property type="protein sequence ID" value="AAY60880.1"/>
    <property type="molecule type" value="Genomic_DNA"/>
</dbReference>
<dbReference type="SMR" id="Q4UNH9"/>
<dbReference type="STRING" id="315456.RF_0029"/>
<dbReference type="KEGG" id="rfe:RF_0029"/>
<dbReference type="eggNOG" id="COG0636">
    <property type="taxonomic scope" value="Bacteria"/>
</dbReference>
<dbReference type="HOGENOM" id="CLU_148047_4_0_5"/>
<dbReference type="OrthoDB" id="9811093at2"/>
<dbReference type="Proteomes" id="UP000008548">
    <property type="component" value="Chromosome"/>
</dbReference>
<dbReference type="GO" id="GO:0005886">
    <property type="term" value="C:plasma membrane"/>
    <property type="evidence" value="ECO:0007669"/>
    <property type="project" value="UniProtKB-SubCell"/>
</dbReference>
<dbReference type="GO" id="GO:0045259">
    <property type="term" value="C:proton-transporting ATP synthase complex"/>
    <property type="evidence" value="ECO:0007669"/>
    <property type="project" value="UniProtKB-KW"/>
</dbReference>
<dbReference type="GO" id="GO:0033177">
    <property type="term" value="C:proton-transporting two-sector ATPase complex, proton-transporting domain"/>
    <property type="evidence" value="ECO:0007669"/>
    <property type="project" value="InterPro"/>
</dbReference>
<dbReference type="GO" id="GO:0008289">
    <property type="term" value="F:lipid binding"/>
    <property type="evidence" value="ECO:0007669"/>
    <property type="project" value="UniProtKB-KW"/>
</dbReference>
<dbReference type="GO" id="GO:0046933">
    <property type="term" value="F:proton-transporting ATP synthase activity, rotational mechanism"/>
    <property type="evidence" value="ECO:0007669"/>
    <property type="project" value="UniProtKB-UniRule"/>
</dbReference>
<dbReference type="CDD" id="cd18182">
    <property type="entry name" value="ATP-synt_Fo_c_ATP5G3"/>
    <property type="match status" value="1"/>
</dbReference>
<dbReference type="Gene3D" id="1.20.20.10">
    <property type="entry name" value="F1F0 ATP synthase subunit C"/>
    <property type="match status" value="1"/>
</dbReference>
<dbReference type="HAMAP" id="MF_01396">
    <property type="entry name" value="ATP_synth_c_bact"/>
    <property type="match status" value="1"/>
</dbReference>
<dbReference type="InterPro" id="IPR000454">
    <property type="entry name" value="ATP_synth_F0_csu"/>
</dbReference>
<dbReference type="InterPro" id="IPR020537">
    <property type="entry name" value="ATP_synth_F0_csu_DDCD_BS"/>
</dbReference>
<dbReference type="InterPro" id="IPR038662">
    <property type="entry name" value="ATP_synth_F0_csu_sf"/>
</dbReference>
<dbReference type="InterPro" id="IPR002379">
    <property type="entry name" value="ATPase_proteolipid_c-like_dom"/>
</dbReference>
<dbReference type="InterPro" id="IPR035921">
    <property type="entry name" value="F/V-ATP_Csub_sf"/>
</dbReference>
<dbReference type="NCBIfam" id="NF005733">
    <property type="entry name" value="PRK07558.1"/>
    <property type="match status" value="1"/>
</dbReference>
<dbReference type="PANTHER" id="PTHR10031">
    <property type="entry name" value="ATP SYNTHASE LIPID-BINDING PROTEIN, MITOCHONDRIAL"/>
    <property type="match status" value="1"/>
</dbReference>
<dbReference type="PANTHER" id="PTHR10031:SF0">
    <property type="entry name" value="ATPASE PROTEIN 9"/>
    <property type="match status" value="1"/>
</dbReference>
<dbReference type="Pfam" id="PF00137">
    <property type="entry name" value="ATP-synt_C"/>
    <property type="match status" value="1"/>
</dbReference>
<dbReference type="PRINTS" id="PR00124">
    <property type="entry name" value="ATPASEC"/>
</dbReference>
<dbReference type="SUPFAM" id="SSF81333">
    <property type="entry name" value="F1F0 ATP synthase subunit C"/>
    <property type="match status" value="1"/>
</dbReference>
<dbReference type="PROSITE" id="PS00605">
    <property type="entry name" value="ATPASE_C"/>
    <property type="match status" value="1"/>
</dbReference>
<name>ATPL_RICFE</name>
<organism>
    <name type="scientific">Rickettsia felis (strain ATCC VR-1525 / URRWXCal2)</name>
    <name type="common">Rickettsia azadi</name>
    <dbReference type="NCBI Taxonomy" id="315456"/>
    <lineage>
        <taxon>Bacteria</taxon>
        <taxon>Pseudomonadati</taxon>
        <taxon>Pseudomonadota</taxon>
        <taxon>Alphaproteobacteria</taxon>
        <taxon>Rickettsiales</taxon>
        <taxon>Rickettsiaceae</taxon>
        <taxon>Rickettsieae</taxon>
        <taxon>Rickettsia</taxon>
        <taxon>spotted fever group</taxon>
    </lineage>
</organism>
<protein>
    <recommendedName>
        <fullName evidence="1">ATP synthase subunit c</fullName>
    </recommendedName>
    <alternativeName>
        <fullName evidence="1">ATP synthase F(0) sector subunit c</fullName>
    </alternativeName>
    <alternativeName>
        <fullName evidence="1">F-type ATPase subunit c</fullName>
        <shortName evidence="1">F-ATPase subunit c</shortName>
    </alternativeName>
    <alternativeName>
        <fullName evidence="1">Lipid-binding protein</fullName>
    </alternativeName>
</protein>
<keyword id="KW-0066">ATP synthesis</keyword>
<keyword id="KW-0997">Cell inner membrane</keyword>
<keyword id="KW-1003">Cell membrane</keyword>
<keyword id="KW-0138">CF(0)</keyword>
<keyword id="KW-0375">Hydrogen ion transport</keyword>
<keyword id="KW-0406">Ion transport</keyword>
<keyword id="KW-0446">Lipid-binding</keyword>
<keyword id="KW-0472">Membrane</keyword>
<keyword id="KW-0812">Transmembrane</keyword>
<keyword id="KW-1133">Transmembrane helix</keyword>
<keyword id="KW-0813">Transport</keyword>
<accession>Q4UNH9</accession>
<comment type="function">
    <text evidence="1">F(1)F(0) ATP synthase produces ATP from ADP in the presence of a proton or sodium gradient. F-type ATPases consist of two structural domains, F(1) containing the extramembraneous catalytic core and F(0) containing the membrane proton channel, linked together by a central stalk and a peripheral stalk. During catalysis, ATP synthesis in the catalytic domain of F(1) is coupled via a rotary mechanism of the central stalk subunits to proton translocation.</text>
</comment>
<comment type="function">
    <text evidence="1">Key component of the F(0) channel; it plays a direct role in translocation across the membrane. A homomeric c-ring of between 10-14 subunits forms the central stalk rotor element with the F(1) delta and epsilon subunits.</text>
</comment>
<comment type="subunit">
    <text evidence="1">F-type ATPases have 2 components, F(1) - the catalytic core - and F(0) - the membrane proton channel. F(1) has five subunits: alpha(3), beta(3), gamma(1), delta(1), epsilon(1). F(0) has three main subunits: a(1), b(2) and c(10-14). The alpha and beta chains form an alternating ring which encloses part of the gamma chain. F(1) is attached to F(0) by a central stalk formed by the gamma and epsilon chains, while a peripheral stalk is formed by the delta and b chains.</text>
</comment>
<comment type="subcellular location">
    <subcellularLocation>
        <location evidence="1">Cell inner membrane</location>
        <topology evidence="1">Multi-pass membrane protein</topology>
    </subcellularLocation>
</comment>
<comment type="similarity">
    <text evidence="1">Belongs to the ATPase C chain family.</text>
</comment>
<feature type="chain" id="PRO_0000288729" description="ATP synthase subunit c">
    <location>
        <begin position="1"/>
        <end position="74"/>
    </location>
</feature>
<feature type="transmembrane region" description="Helical" evidence="1">
    <location>
        <begin position="8"/>
        <end position="28"/>
    </location>
</feature>
<feature type="transmembrane region" description="Helical" evidence="1">
    <location>
        <begin position="52"/>
        <end position="72"/>
    </location>
</feature>
<feature type="site" description="Reversibly protonated during proton transport" evidence="1">
    <location>
        <position position="58"/>
    </location>
</feature>
<gene>
    <name evidence="1" type="primary">atpE</name>
    <name type="ordered locus">RF_0029</name>
</gene>